<reference key="1">
    <citation type="submission" date="2006-06" db="EMBL/GenBank/DDBJ databases">
        <title>Complete sequence of chromosome of Mycobacterium sp. MCS.</title>
        <authorList>
            <consortium name="US DOE Joint Genome Institute"/>
            <person name="Copeland A."/>
            <person name="Lucas S."/>
            <person name="Lapidus A."/>
            <person name="Barry K."/>
            <person name="Detter J.C."/>
            <person name="Glavina del Rio T."/>
            <person name="Hammon N."/>
            <person name="Israni S."/>
            <person name="Dalin E."/>
            <person name="Tice H."/>
            <person name="Pitluck S."/>
            <person name="Martinez M."/>
            <person name="Schmutz J."/>
            <person name="Larimer F."/>
            <person name="Land M."/>
            <person name="Hauser L."/>
            <person name="Kyrpides N."/>
            <person name="Kim E."/>
            <person name="Miller C.D."/>
            <person name="Hughes J.E."/>
            <person name="Anderson A.J."/>
            <person name="Sims R.C."/>
            <person name="Richardson P."/>
        </authorList>
    </citation>
    <scope>NUCLEOTIDE SEQUENCE [LARGE SCALE GENOMIC DNA]</scope>
    <source>
        <strain>MCS</strain>
    </source>
</reference>
<gene>
    <name type="ordered locus">Mmcs_3077</name>
</gene>
<proteinExistence type="inferred from homology"/>
<feature type="chain" id="PRO_0000381042" description="8-amino-7-oxononanoate synthase">
    <location>
        <begin position="1"/>
        <end position="382"/>
    </location>
</feature>
<feature type="binding site" evidence="1">
    <location>
        <position position="26"/>
    </location>
    <ligand>
        <name>substrate</name>
    </ligand>
</feature>
<feature type="binding site" evidence="1">
    <location>
        <begin position="104"/>
        <end position="105"/>
    </location>
    <ligand>
        <name>pyridoxal 5'-phosphate</name>
        <dbReference type="ChEBI" id="CHEBI:597326"/>
    </ligand>
</feature>
<feature type="binding site" evidence="1">
    <location>
        <position position="129"/>
    </location>
    <ligand>
        <name>substrate</name>
    </ligand>
</feature>
<feature type="binding site" evidence="1">
    <location>
        <position position="175"/>
    </location>
    <ligand>
        <name>pyridoxal 5'-phosphate</name>
        <dbReference type="ChEBI" id="CHEBI:597326"/>
    </ligand>
</feature>
<feature type="binding site" evidence="1">
    <location>
        <begin position="200"/>
        <end position="203"/>
    </location>
    <ligand>
        <name>pyridoxal 5'-phosphate</name>
        <dbReference type="ChEBI" id="CHEBI:597326"/>
    </ligand>
</feature>
<feature type="binding site" evidence="1">
    <location>
        <begin position="232"/>
        <end position="235"/>
    </location>
    <ligand>
        <name>pyridoxal 5'-phosphate</name>
        <dbReference type="ChEBI" id="CHEBI:597326"/>
    </ligand>
</feature>
<feature type="binding site" evidence="1">
    <location>
        <position position="345"/>
    </location>
    <ligand>
        <name>substrate</name>
    </ligand>
</feature>
<feature type="modified residue" description="N6-(pyridoxal phosphate)lysine" evidence="1">
    <location>
        <position position="235"/>
    </location>
</feature>
<organism>
    <name type="scientific">Mycobacterium sp. (strain MCS)</name>
    <dbReference type="NCBI Taxonomy" id="164756"/>
    <lineage>
        <taxon>Bacteria</taxon>
        <taxon>Bacillati</taxon>
        <taxon>Actinomycetota</taxon>
        <taxon>Actinomycetes</taxon>
        <taxon>Mycobacteriales</taxon>
        <taxon>Mycobacteriaceae</taxon>
        <taxon>Mycobacterium</taxon>
    </lineage>
</organism>
<protein>
    <recommendedName>
        <fullName>8-amino-7-oxononanoate synthase</fullName>
        <shortName>AONS</shortName>
        <ecNumber>2.3.1.47</ecNumber>
    </recommendedName>
    <alternativeName>
        <fullName>7-keto-8-amino-pelargonic acid synthase</fullName>
        <shortName>7-KAP synthase</shortName>
        <shortName>KAPA synthase</shortName>
    </alternativeName>
    <alternativeName>
        <fullName>8-amino-7-ketopelargonate synthase</fullName>
    </alternativeName>
    <alternativeName>
        <fullName>Alpha-oxoamine synthase</fullName>
    </alternativeName>
</protein>
<accession>Q1B7F0</accession>
<name>BIOF_MYCSS</name>
<sequence length="382" mass="39445">MTRAGLSPLAWLDEVADQRRAAGLRRALRTRPAGGTAVDLASNDYLGLSTHPRVVEGAVRAVREWGAGSTGSRLVTGNTELHEGFERALAAFTGAESALVFSSGYTANLGAVVALSGPGSLLVSDALTHASLVDACRLSRARVVVTPHRDVTAIETALATRDEQRAIVVTDSVFSADGVLAPLRDMHDVCRRHGALLIVDEAHGLGVRGTGGRGLLDEVGLAGAPDVVMTTTLSKALGSQGGVVLGPLAVRDHLIDAARPFIFDTGLAPAAVGAAWAALEVLVDEPSRARAVLDNAAALAQACDVPARPDSAVVSVILGEPEVALAAAIACLEQGLRVGCFRPPTVPAGTSRLRLTARASLTDDDLDTARRVLADVLTAARR</sequence>
<keyword id="KW-0012">Acyltransferase</keyword>
<keyword id="KW-0093">Biotin biosynthesis</keyword>
<keyword id="KW-0663">Pyridoxal phosphate</keyword>
<keyword id="KW-0808">Transferase</keyword>
<dbReference type="EC" id="2.3.1.47"/>
<dbReference type="EMBL" id="CP000384">
    <property type="protein sequence ID" value="ABG09184.1"/>
    <property type="molecule type" value="Genomic_DNA"/>
</dbReference>
<dbReference type="SMR" id="Q1B7F0"/>
<dbReference type="KEGG" id="mmc:Mmcs_3077"/>
<dbReference type="HOGENOM" id="CLU_015846_11_2_11"/>
<dbReference type="BioCyc" id="MSP164756:G1G6O-3141-MONOMER"/>
<dbReference type="UniPathway" id="UPA00078"/>
<dbReference type="GO" id="GO:0008710">
    <property type="term" value="F:8-amino-7-oxononanoate synthase activity"/>
    <property type="evidence" value="ECO:0007669"/>
    <property type="project" value="UniProtKB-EC"/>
</dbReference>
<dbReference type="GO" id="GO:0030170">
    <property type="term" value="F:pyridoxal phosphate binding"/>
    <property type="evidence" value="ECO:0007669"/>
    <property type="project" value="InterPro"/>
</dbReference>
<dbReference type="GO" id="GO:0009102">
    <property type="term" value="P:biotin biosynthetic process"/>
    <property type="evidence" value="ECO:0007669"/>
    <property type="project" value="UniProtKB-UniPathway"/>
</dbReference>
<dbReference type="Gene3D" id="3.90.1150.10">
    <property type="entry name" value="Aspartate Aminotransferase, domain 1"/>
    <property type="match status" value="1"/>
</dbReference>
<dbReference type="Gene3D" id="3.40.640.10">
    <property type="entry name" value="Type I PLP-dependent aspartate aminotransferase-like (Major domain)"/>
    <property type="match status" value="1"/>
</dbReference>
<dbReference type="InterPro" id="IPR001917">
    <property type="entry name" value="Aminotrans_II_pyridoxalP_BS"/>
</dbReference>
<dbReference type="InterPro" id="IPR004839">
    <property type="entry name" value="Aminotransferase_I/II_large"/>
</dbReference>
<dbReference type="InterPro" id="IPR050087">
    <property type="entry name" value="AON_synthase_class-II"/>
</dbReference>
<dbReference type="InterPro" id="IPR015424">
    <property type="entry name" value="PyrdxlP-dep_Trfase"/>
</dbReference>
<dbReference type="InterPro" id="IPR015421">
    <property type="entry name" value="PyrdxlP-dep_Trfase_major"/>
</dbReference>
<dbReference type="InterPro" id="IPR015422">
    <property type="entry name" value="PyrdxlP-dep_Trfase_small"/>
</dbReference>
<dbReference type="PANTHER" id="PTHR13693:SF100">
    <property type="entry name" value="8-AMINO-7-OXONONANOATE SYNTHASE"/>
    <property type="match status" value="1"/>
</dbReference>
<dbReference type="PANTHER" id="PTHR13693">
    <property type="entry name" value="CLASS II AMINOTRANSFERASE/8-AMINO-7-OXONONANOATE SYNTHASE"/>
    <property type="match status" value="1"/>
</dbReference>
<dbReference type="Pfam" id="PF00155">
    <property type="entry name" value="Aminotran_1_2"/>
    <property type="match status" value="1"/>
</dbReference>
<dbReference type="SUPFAM" id="SSF53383">
    <property type="entry name" value="PLP-dependent transferases"/>
    <property type="match status" value="1"/>
</dbReference>
<dbReference type="PROSITE" id="PS00599">
    <property type="entry name" value="AA_TRANSFER_CLASS_2"/>
    <property type="match status" value="1"/>
</dbReference>
<comment type="function">
    <text evidence="1">Catalyzes the decarboxylative condensation of pimeloyl-[acyl-carrier protein] and L-alanine to produce 8-amino-7-oxononanoate (AON), [acyl-carrier protein], and carbon dioxide.</text>
</comment>
<comment type="catalytic activity">
    <reaction>
        <text>6-carboxyhexanoyl-[ACP] + L-alanine + H(+) = (8S)-8-amino-7-oxononanoate + holo-[ACP] + CO2</text>
        <dbReference type="Rhea" id="RHEA:42288"/>
        <dbReference type="Rhea" id="RHEA-COMP:9685"/>
        <dbReference type="Rhea" id="RHEA-COMP:9955"/>
        <dbReference type="ChEBI" id="CHEBI:15378"/>
        <dbReference type="ChEBI" id="CHEBI:16526"/>
        <dbReference type="ChEBI" id="CHEBI:57972"/>
        <dbReference type="ChEBI" id="CHEBI:64479"/>
        <dbReference type="ChEBI" id="CHEBI:78846"/>
        <dbReference type="ChEBI" id="CHEBI:149468"/>
        <dbReference type="EC" id="2.3.1.47"/>
    </reaction>
</comment>
<comment type="cofactor">
    <cofactor evidence="1">
        <name>pyridoxal 5'-phosphate</name>
        <dbReference type="ChEBI" id="CHEBI:597326"/>
    </cofactor>
</comment>
<comment type="pathway">
    <text>Cofactor biosynthesis; biotin biosynthesis.</text>
</comment>
<comment type="subunit">
    <text evidence="1">Homodimer.</text>
</comment>
<comment type="similarity">
    <text evidence="2">Belongs to the class-II pyridoxal-phosphate-dependent aminotransferase family. BioF subfamily.</text>
</comment>
<evidence type="ECO:0000250" key="1"/>
<evidence type="ECO:0000305" key="2"/>